<keyword id="KW-0067">ATP-binding</keyword>
<keyword id="KW-0963">Cytoplasm</keyword>
<keyword id="KW-0347">Helicase</keyword>
<keyword id="KW-0378">Hydrolase</keyword>
<keyword id="KW-0396">Initiation factor</keyword>
<keyword id="KW-0547">Nucleotide-binding</keyword>
<keyword id="KW-0648">Protein biosynthesis</keyword>
<keyword id="KW-1185">Reference proteome</keyword>
<keyword id="KW-0694">RNA-binding</keyword>
<sequence>MADQINMGGLSLNEGGHQGPPQGRSYIPPHMRGRGGPPPAGPQAGGPPVMNGGPPAAAPGPNGIGNSAWANQNYGARQNNWSNDVPTYQGNNNRRGGWGGRGGGYSGGGNFDGHSGGGGAPTARGSGDGQWRDGKHIPGPANPRVERELFGVTAEDPSKQHTGINFEKYDDIPVEASGTDVPEPVHQFTTPPLDEHLCRNIELAHYKVPTPVQKYSIPIVSGGRDLMACAQTGSGKTGGFLFPILSQAFINGPSAVPANAAGQFGRQRKAYPTSLILAPTRELVSQIFDESRKFAYRSWVRPCVVYGGADIGSQLRQIERGCDLLVATPGRLVDLIERGRISLQNIKYLVLDEADRMLDMGFEPQIRRIVEGEDMPQVQDRQTLMFSATFPRDIQMLARDFLKDYIFLSVGRVGSTSENITQKVEYVEDVDKRSVLLDILHSHANGLTLIFVETKRMADSLSDFLINQNFPATSIHGDRTQRERERALEFFRNGRCPILVATAVAARGLDIPHVTHVINYDLPTDVDDYVHRIGRTGRAGNTGIATAFFNRGNRGIVRELMDLLKEANQEVPAFLETIARESSFGGGGRGGRSRGGGGRGGATRDFRKFGGGGFGGNNNGGGGGFNNAGSQGAGFSAGGGGGAGYGGGAGYGGGAGYGGGGYGNPSGPGAQSSWW</sequence>
<name>DED1_GIBZE</name>
<gene>
    <name type="primary">DED1</name>
    <name type="ORF">FGRRES_06804</name>
    <name type="ORF">FGSG_06804</name>
</gene>
<proteinExistence type="inferred from homology"/>
<accession>Q4I7K4</accession>
<accession>A0A0E0SAV1</accession>
<accession>V6RFB4</accession>
<protein>
    <recommendedName>
        <fullName>ATP-dependent RNA helicase DED1</fullName>
        <ecNumber>3.6.4.13</ecNumber>
    </recommendedName>
</protein>
<evidence type="ECO:0000250" key="1"/>
<evidence type="ECO:0000255" key="2">
    <source>
        <dbReference type="PROSITE-ProRule" id="PRU00541"/>
    </source>
</evidence>
<evidence type="ECO:0000255" key="3">
    <source>
        <dbReference type="PROSITE-ProRule" id="PRU00542"/>
    </source>
</evidence>
<evidence type="ECO:0000256" key="4">
    <source>
        <dbReference type="SAM" id="MobiDB-lite"/>
    </source>
</evidence>
<evidence type="ECO:0000305" key="5"/>
<feature type="chain" id="PRO_0000232159" description="ATP-dependent RNA helicase DED1">
    <location>
        <begin position="1"/>
        <end position="675"/>
    </location>
</feature>
<feature type="domain" description="Helicase ATP-binding" evidence="2">
    <location>
        <begin position="217"/>
        <end position="408"/>
    </location>
</feature>
<feature type="domain" description="Helicase C-terminal" evidence="3">
    <location>
        <begin position="419"/>
        <end position="579"/>
    </location>
</feature>
<feature type="region of interest" description="Disordered" evidence="4">
    <location>
        <begin position="1"/>
        <end position="143"/>
    </location>
</feature>
<feature type="region of interest" description="Disordered" evidence="4">
    <location>
        <begin position="582"/>
        <end position="613"/>
    </location>
</feature>
<feature type="short sequence motif" description="Q motif">
    <location>
        <begin position="186"/>
        <end position="214"/>
    </location>
</feature>
<feature type="short sequence motif" description="DEAD box">
    <location>
        <begin position="352"/>
        <end position="355"/>
    </location>
</feature>
<feature type="compositionally biased region" description="Low complexity" evidence="4">
    <location>
        <begin position="46"/>
        <end position="68"/>
    </location>
</feature>
<feature type="compositionally biased region" description="Polar residues" evidence="4">
    <location>
        <begin position="69"/>
        <end position="89"/>
    </location>
</feature>
<feature type="compositionally biased region" description="Gly residues" evidence="4">
    <location>
        <begin position="96"/>
        <end position="120"/>
    </location>
</feature>
<feature type="compositionally biased region" description="Gly residues" evidence="4">
    <location>
        <begin position="584"/>
        <end position="601"/>
    </location>
</feature>
<feature type="binding site" evidence="2">
    <location>
        <begin position="230"/>
        <end position="237"/>
    </location>
    <ligand>
        <name>ATP</name>
        <dbReference type="ChEBI" id="CHEBI:30616"/>
    </ligand>
</feature>
<comment type="function">
    <text evidence="1">ATP-binding RNA helicase involved in translation initiation. Remodels RNA in response to ADP and ATP concentrations by facilitating disruption, but also formation of RNA duplexes (By similarity).</text>
</comment>
<comment type="catalytic activity">
    <reaction>
        <text>ATP + H2O = ADP + phosphate + H(+)</text>
        <dbReference type="Rhea" id="RHEA:13065"/>
        <dbReference type="ChEBI" id="CHEBI:15377"/>
        <dbReference type="ChEBI" id="CHEBI:15378"/>
        <dbReference type="ChEBI" id="CHEBI:30616"/>
        <dbReference type="ChEBI" id="CHEBI:43474"/>
        <dbReference type="ChEBI" id="CHEBI:456216"/>
        <dbReference type="EC" id="3.6.4.13"/>
    </reaction>
</comment>
<comment type="subcellular location">
    <subcellularLocation>
        <location evidence="1">Cytoplasm</location>
    </subcellularLocation>
</comment>
<comment type="domain">
    <text>The Q motif is unique to and characteristic of the DEAD box family of RNA helicases and controls ATP binding and hydrolysis.</text>
</comment>
<comment type="similarity">
    <text evidence="5">Belongs to the DEAD box helicase family. DDX3/DED1 subfamily.</text>
</comment>
<dbReference type="EC" id="3.6.4.13"/>
<dbReference type="EMBL" id="DS231666">
    <property type="protein sequence ID" value="ESU12949.1"/>
    <property type="molecule type" value="Genomic_DNA"/>
</dbReference>
<dbReference type="EMBL" id="HG970335">
    <property type="protein sequence ID" value="CEF83564.1"/>
    <property type="molecule type" value="Genomic_DNA"/>
</dbReference>
<dbReference type="RefSeq" id="XP_011326456.1">
    <property type="nucleotide sequence ID" value="XM_011328154.1"/>
</dbReference>
<dbReference type="SMR" id="Q4I7K4"/>
<dbReference type="FunCoup" id="Q4I7K4">
    <property type="interactions" value="1297"/>
</dbReference>
<dbReference type="STRING" id="229533.Q4I7K4"/>
<dbReference type="GeneID" id="23553919"/>
<dbReference type="KEGG" id="fgr:FGSG_06804"/>
<dbReference type="VEuPathDB" id="FungiDB:FGRAMPH1_01G23225"/>
<dbReference type="eggNOG" id="KOG0335">
    <property type="taxonomic scope" value="Eukaryota"/>
</dbReference>
<dbReference type="HOGENOM" id="CLU_003041_16_3_1"/>
<dbReference type="InParanoid" id="Q4I7K4"/>
<dbReference type="OrthoDB" id="123355at110618"/>
<dbReference type="Proteomes" id="UP000070720">
    <property type="component" value="Chromosome 4"/>
</dbReference>
<dbReference type="GO" id="GO:0005737">
    <property type="term" value="C:cytoplasm"/>
    <property type="evidence" value="ECO:0007669"/>
    <property type="project" value="UniProtKB-SubCell"/>
</dbReference>
<dbReference type="GO" id="GO:0005524">
    <property type="term" value="F:ATP binding"/>
    <property type="evidence" value="ECO:0007669"/>
    <property type="project" value="UniProtKB-KW"/>
</dbReference>
<dbReference type="GO" id="GO:0016887">
    <property type="term" value="F:ATP hydrolysis activity"/>
    <property type="evidence" value="ECO:0007669"/>
    <property type="project" value="RHEA"/>
</dbReference>
<dbReference type="GO" id="GO:0003723">
    <property type="term" value="F:RNA binding"/>
    <property type="evidence" value="ECO:0007669"/>
    <property type="project" value="UniProtKB-KW"/>
</dbReference>
<dbReference type="GO" id="GO:0003724">
    <property type="term" value="F:RNA helicase activity"/>
    <property type="evidence" value="ECO:0007669"/>
    <property type="project" value="UniProtKB-EC"/>
</dbReference>
<dbReference type="GO" id="GO:0003743">
    <property type="term" value="F:translation initiation factor activity"/>
    <property type="evidence" value="ECO:0007669"/>
    <property type="project" value="UniProtKB-KW"/>
</dbReference>
<dbReference type="CDD" id="cd18787">
    <property type="entry name" value="SF2_C_DEAD"/>
    <property type="match status" value="1"/>
</dbReference>
<dbReference type="FunFam" id="3.40.50.300:FF:000160">
    <property type="entry name" value="ATP-dependent RNA helicase DDX3X"/>
    <property type="match status" value="1"/>
</dbReference>
<dbReference type="FunFam" id="3.40.50.300:FF:000008">
    <property type="entry name" value="ATP-dependent RNA helicase RhlB"/>
    <property type="match status" value="1"/>
</dbReference>
<dbReference type="Gene3D" id="3.40.50.300">
    <property type="entry name" value="P-loop containing nucleotide triphosphate hydrolases"/>
    <property type="match status" value="2"/>
</dbReference>
<dbReference type="InterPro" id="IPR011545">
    <property type="entry name" value="DEAD/DEAH_box_helicase_dom"/>
</dbReference>
<dbReference type="InterPro" id="IPR014001">
    <property type="entry name" value="Helicase_ATP-bd"/>
</dbReference>
<dbReference type="InterPro" id="IPR001650">
    <property type="entry name" value="Helicase_C-like"/>
</dbReference>
<dbReference type="InterPro" id="IPR027417">
    <property type="entry name" value="P-loop_NTPase"/>
</dbReference>
<dbReference type="InterPro" id="IPR000629">
    <property type="entry name" value="RNA-helicase_DEAD-box_CS"/>
</dbReference>
<dbReference type="InterPro" id="IPR014014">
    <property type="entry name" value="RNA_helicase_DEAD_Q_motif"/>
</dbReference>
<dbReference type="PANTHER" id="PTHR47958">
    <property type="entry name" value="ATP-DEPENDENT RNA HELICASE DBP3"/>
    <property type="match status" value="1"/>
</dbReference>
<dbReference type="Pfam" id="PF00270">
    <property type="entry name" value="DEAD"/>
    <property type="match status" value="1"/>
</dbReference>
<dbReference type="Pfam" id="PF00271">
    <property type="entry name" value="Helicase_C"/>
    <property type="match status" value="1"/>
</dbReference>
<dbReference type="SMART" id="SM00487">
    <property type="entry name" value="DEXDc"/>
    <property type="match status" value="1"/>
</dbReference>
<dbReference type="SMART" id="SM00490">
    <property type="entry name" value="HELICc"/>
    <property type="match status" value="1"/>
</dbReference>
<dbReference type="SUPFAM" id="SSF52540">
    <property type="entry name" value="P-loop containing nucleoside triphosphate hydrolases"/>
    <property type="match status" value="1"/>
</dbReference>
<dbReference type="PROSITE" id="PS00039">
    <property type="entry name" value="DEAD_ATP_HELICASE"/>
    <property type="match status" value="1"/>
</dbReference>
<dbReference type="PROSITE" id="PS51192">
    <property type="entry name" value="HELICASE_ATP_BIND_1"/>
    <property type="match status" value="1"/>
</dbReference>
<dbReference type="PROSITE" id="PS51194">
    <property type="entry name" value="HELICASE_CTER"/>
    <property type="match status" value="1"/>
</dbReference>
<dbReference type="PROSITE" id="PS51195">
    <property type="entry name" value="Q_MOTIF"/>
    <property type="match status" value="1"/>
</dbReference>
<reference key="1">
    <citation type="journal article" date="2007" name="Science">
        <title>The Fusarium graminearum genome reveals a link between localized polymorphism and pathogen specialization.</title>
        <authorList>
            <person name="Cuomo C.A."/>
            <person name="Gueldener U."/>
            <person name="Xu J.-R."/>
            <person name="Trail F."/>
            <person name="Turgeon B.G."/>
            <person name="Di Pietro A."/>
            <person name="Walton J.D."/>
            <person name="Ma L.-J."/>
            <person name="Baker S.E."/>
            <person name="Rep M."/>
            <person name="Adam G."/>
            <person name="Antoniw J."/>
            <person name="Baldwin T."/>
            <person name="Calvo S.E."/>
            <person name="Chang Y.-L."/>
            <person name="DeCaprio D."/>
            <person name="Gale L.R."/>
            <person name="Gnerre S."/>
            <person name="Goswami R.S."/>
            <person name="Hammond-Kosack K."/>
            <person name="Harris L.J."/>
            <person name="Hilburn K."/>
            <person name="Kennell J.C."/>
            <person name="Kroken S."/>
            <person name="Magnuson J.K."/>
            <person name="Mannhaupt G."/>
            <person name="Mauceli E.W."/>
            <person name="Mewes H.-W."/>
            <person name="Mitterbauer R."/>
            <person name="Muehlbauer G."/>
            <person name="Muensterkoetter M."/>
            <person name="Nelson D."/>
            <person name="O'Donnell K."/>
            <person name="Ouellet T."/>
            <person name="Qi W."/>
            <person name="Quesneville H."/>
            <person name="Roncero M.I.G."/>
            <person name="Seong K.-Y."/>
            <person name="Tetko I.V."/>
            <person name="Urban M."/>
            <person name="Waalwijk C."/>
            <person name="Ward T.J."/>
            <person name="Yao J."/>
            <person name="Birren B.W."/>
            <person name="Kistler H.C."/>
        </authorList>
    </citation>
    <scope>NUCLEOTIDE SEQUENCE [LARGE SCALE GENOMIC DNA]</scope>
    <source>
        <strain>ATCC MYA-4620 / CBS 123657 / FGSC 9075 / NRRL 31084 / PH-1</strain>
    </source>
</reference>
<reference key="2">
    <citation type="journal article" date="2010" name="Nature">
        <title>Comparative genomics reveals mobile pathogenicity chromosomes in Fusarium.</title>
        <authorList>
            <person name="Ma L.-J."/>
            <person name="van der Does H.C."/>
            <person name="Borkovich K.A."/>
            <person name="Coleman J.J."/>
            <person name="Daboussi M.-J."/>
            <person name="Di Pietro A."/>
            <person name="Dufresne M."/>
            <person name="Freitag M."/>
            <person name="Grabherr M."/>
            <person name="Henrissat B."/>
            <person name="Houterman P.M."/>
            <person name="Kang S."/>
            <person name="Shim W.-B."/>
            <person name="Woloshuk C."/>
            <person name="Xie X."/>
            <person name="Xu J.-R."/>
            <person name="Antoniw J."/>
            <person name="Baker S.E."/>
            <person name="Bluhm B.H."/>
            <person name="Breakspear A."/>
            <person name="Brown D.W."/>
            <person name="Butchko R.A.E."/>
            <person name="Chapman S."/>
            <person name="Coulson R."/>
            <person name="Coutinho P.M."/>
            <person name="Danchin E.G.J."/>
            <person name="Diener A."/>
            <person name="Gale L.R."/>
            <person name="Gardiner D.M."/>
            <person name="Goff S."/>
            <person name="Hammond-Kosack K.E."/>
            <person name="Hilburn K."/>
            <person name="Hua-Van A."/>
            <person name="Jonkers W."/>
            <person name="Kazan K."/>
            <person name="Kodira C.D."/>
            <person name="Koehrsen M."/>
            <person name="Kumar L."/>
            <person name="Lee Y.-H."/>
            <person name="Li L."/>
            <person name="Manners J.M."/>
            <person name="Miranda-Saavedra D."/>
            <person name="Mukherjee M."/>
            <person name="Park G."/>
            <person name="Park J."/>
            <person name="Park S.-Y."/>
            <person name="Proctor R.H."/>
            <person name="Regev A."/>
            <person name="Ruiz-Roldan M.C."/>
            <person name="Sain D."/>
            <person name="Sakthikumar S."/>
            <person name="Sykes S."/>
            <person name="Schwartz D.C."/>
            <person name="Turgeon B.G."/>
            <person name="Wapinski I."/>
            <person name="Yoder O."/>
            <person name="Young S."/>
            <person name="Zeng Q."/>
            <person name="Zhou S."/>
            <person name="Galagan J."/>
            <person name="Cuomo C.A."/>
            <person name="Kistler H.C."/>
            <person name="Rep M."/>
        </authorList>
    </citation>
    <scope>GENOME REANNOTATION</scope>
    <source>
        <strain>ATCC MYA-4620 / CBS 123657 / FGSC 9075 / NRRL 31084 / PH-1</strain>
    </source>
</reference>
<reference key="3">
    <citation type="journal article" date="2015" name="BMC Genomics">
        <title>The completed genome sequence of the pathogenic ascomycete fungus Fusarium graminearum.</title>
        <authorList>
            <person name="King R."/>
            <person name="Urban M."/>
            <person name="Hammond-Kosack M.C.U."/>
            <person name="Hassani-Pak K."/>
            <person name="Hammond-Kosack K.E."/>
        </authorList>
    </citation>
    <scope>NUCLEOTIDE SEQUENCE [LARGE SCALE GENOMIC DNA]</scope>
    <source>
        <strain>ATCC MYA-4620 / CBS 123657 / FGSC 9075 / NRRL 31084 / PH-1</strain>
    </source>
</reference>
<organism>
    <name type="scientific">Gibberella zeae (strain ATCC MYA-4620 / CBS 123657 / FGSC 9075 / NRRL 31084 / PH-1)</name>
    <name type="common">Wheat head blight fungus</name>
    <name type="synonym">Fusarium graminearum</name>
    <dbReference type="NCBI Taxonomy" id="229533"/>
    <lineage>
        <taxon>Eukaryota</taxon>
        <taxon>Fungi</taxon>
        <taxon>Dikarya</taxon>
        <taxon>Ascomycota</taxon>
        <taxon>Pezizomycotina</taxon>
        <taxon>Sordariomycetes</taxon>
        <taxon>Hypocreomycetidae</taxon>
        <taxon>Hypocreales</taxon>
        <taxon>Nectriaceae</taxon>
        <taxon>Fusarium</taxon>
    </lineage>
</organism>